<sequence>MDDDGELGMFFPSWTSKNPIDTVESRGLMFSCFVAALVGILTIAYTAFQWRRNINLSWTKAIARSKKNPKARHKVPVAPHSWELDPIARAKNLNCCVCLKSMSPSQAIVASESFFHRCTICGAAAHFNCSSSAPKDCKCVSMVGFEHVVHQWAVRWTEGADQTDDSSFCSYCDESCSSSFLGGSPIWCCLWCQRLVHVDCHSNMSNETGDICDLGPLRRLILCPLYVKELTRNPSGGFLSSITHGANELASTALASIRIQSKKYKQTNETSADTGNSGSNCDESTESTADTGPTVNGAHAVLENSISVMNGDSSNGDSDSNGKLEKKPSVKRTGSFGQKEYHALRSKLKYELADLPSDARPLLVFINKKSGAQRGDSLRQRLHLHLNPVQVFELSSVQGPEVGLFLFRKVPHFRVLVCGGDGTAGWVLDAIEKQNFISPPAVAILPAGTGNDLSRVLNWGGGLGSVERQGGLSTVLQNIEHAAVTVLDRWKVSILNQQGKQLQPPKYMNNYIGVGCDAKVALEIHNLREENPERFYSQFMNKVLYAREGARSIMDRTFEDFPWQVRVEVDGVDIEVPEDAEGILVANIGSYMGGVDLWQNEDETYENFDPQSMHDKIVEVVSISGTWHLGKLQVGLSRARRLAQGSAVKIQLCAPLPVQIDGEPWNQQPCTLTISHHGQAFMLKRAAEEPLGHAAAIITDVLENAETNQVINASQKRTLLQEMALRLT</sequence>
<gene>
    <name type="primary">DGK1</name>
    <name type="ordered locus">At5g07920</name>
    <name type="ORF">F13G24.120</name>
    <name type="ORF">MXM12.16</name>
</gene>
<evidence type="ECO:0000250" key="1"/>
<evidence type="ECO:0000255" key="2"/>
<evidence type="ECO:0000255" key="3">
    <source>
        <dbReference type="PROSITE-ProRule" id="PRU00226"/>
    </source>
</evidence>
<evidence type="ECO:0000255" key="4">
    <source>
        <dbReference type="PROSITE-ProRule" id="PRU00783"/>
    </source>
</evidence>
<evidence type="ECO:0000256" key="5">
    <source>
        <dbReference type="SAM" id="MobiDB-lite"/>
    </source>
</evidence>
<evidence type="ECO:0000269" key="6">
    <source>
    </source>
</evidence>
<evidence type="ECO:0000269" key="7">
    <source>
    </source>
</evidence>
<evidence type="ECO:0000305" key="8"/>
<evidence type="ECO:0000305" key="9">
    <source>
    </source>
</evidence>
<evidence type="ECO:0007744" key="10">
    <source>
    </source>
</evidence>
<reference key="1">
    <citation type="journal article" date="1996" name="Plant Mol. Biol.">
        <title>Molecular cloning of a cDNA encoding diacylglycerol kinase (DGK) in Arabidopsis thaliana.</title>
        <authorList>
            <person name="Katagiri T."/>
            <person name="Mizoguchi T."/>
            <person name="Shinozaki K."/>
        </authorList>
    </citation>
    <scope>NUCLEOTIDE SEQUENCE [MRNA]</scope>
    <scope>TISSUE SPECIFICITY</scope>
    <source>
        <strain>cv. Columbia</strain>
    </source>
</reference>
<reference key="2">
    <citation type="journal article" date="2000" name="Nature">
        <title>Sequence and analysis of chromosome 5 of the plant Arabidopsis thaliana.</title>
        <authorList>
            <person name="Tabata S."/>
            <person name="Kaneko T."/>
            <person name="Nakamura Y."/>
            <person name="Kotani H."/>
            <person name="Kato T."/>
            <person name="Asamizu E."/>
            <person name="Miyajima N."/>
            <person name="Sasamoto S."/>
            <person name="Kimura T."/>
            <person name="Hosouchi T."/>
            <person name="Kawashima K."/>
            <person name="Kohara M."/>
            <person name="Matsumoto M."/>
            <person name="Matsuno A."/>
            <person name="Muraki A."/>
            <person name="Nakayama S."/>
            <person name="Nakazaki N."/>
            <person name="Naruo K."/>
            <person name="Okumura S."/>
            <person name="Shinpo S."/>
            <person name="Takeuchi C."/>
            <person name="Wada T."/>
            <person name="Watanabe A."/>
            <person name="Yamada M."/>
            <person name="Yasuda M."/>
            <person name="Sato S."/>
            <person name="de la Bastide M."/>
            <person name="Huang E."/>
            <person name="Spiegel L."/>
            <person name="Gnoj L."/>
            <person name="O'Shaughnessy A."/>
            <person name="Preston R."/>
            <person name="Habermann K."/>
            <person name="Murray J."/>
            <person name="Johnson D."/>
            <person name="Rohlfing T."/>
            <person name="Nelson J."/>
            <person name="Stoneking T."/>
            <person name="Pepin K."/>
            <person name="Spieth J."/>
            <person name="Sekhon M."/>
            <person name="Armstrong J."/>
            <person name="Becker M."/>
            <person name="Belter E."/>
            <person name="Cordum H."/>
            <person name="Cordes M."/>
            <person name="Courtney L."/>
            <person name="Courtney W."/>
            <person name="Dante M."/>
            <person name="Du H."/>
            <person name="Edwards J."/>
            <person name="Fryman J."/>
            <person name="Haakensen B."/>
            <person name="Lamar E."/>
            <person name="Latreille P."/>
            <person name="Leonard S."/>
            <person name="Meyer R."/>
            <person name="Mulvaney E."/>
            <person name="Ozersky P."/>
            <person name="Riley A."/>
            <person name="Strowmatt C."/>
            <person name="Wagner-McPherson C."/>
            <person name="Wollam A."/>
            <person name="Yoakum M."/>
            <person name="Bell M."/>
            <person name="Dedhia N."/>
            <person name="Parnell L."/>
            <person name="Shah R."/>
            <person name="Rodriguez M."/>
            <person name="Hoon See L."/>
            <person name="Vil D."/>
            <person name="Baker J."/>
            <person name="Kirchoff K."/>
            <person name="Toth K."/>
            <person name="King L."/>
            <person name="Bahret A."/>
            <person name="Miller B."/>
            <person name="Marra M.A."/>
            <person name="Martienssen R."/>
            <person name="McCombie W.R."/>
            <person name="Wilson R.K."/>
            <person name="Murphy G."/>
            <person name="Bancroft I."/>
            <person name="Volckaert G."/>
            <person name="Wambutt R."/>
            <person name="Duesterhoeft A."/>
            <person name="Stiekema W."/>
            <person name="Pohl T."/>
            <person name="Entian K.-D."/>
            <person name="Terryn N."/>
            <person name="Hartley N."/>
            <person name="Bent E."/>
            <person name="Johnson S."/>
            <person name="Langham S.-A."/>
            <person name="McCullagh B."/>
            <person name="Robben J."/>
            <person name="Grymonprez B."/>
            <person name="Zimmermann W."/>
            <person name="Ramsperger U."/>
            <person name="Wedler H."/>
            <person name="Balke K."/>
            <person name="Wedler E."/>
            <person name="Peters S."/>
            <person name="van Staveren M."/>
            <person name="Dirkse W."/>
            <person name="Mooijman P."/>
            <person name="Klein Lankhorst R."/>
            <person name="Weitzenegger T."/>
            <person name="Bothe G."/>
            <person name="Rose M."/>
            <person name="Hauf J."/>
            <person name="Berneiser S."/>
            <person name="Hempel S."/>
            <person name="Feldpausch M."/>
            <person name="Lamberth S."/>
            <person name="Villarroel R."/>
            <person name="Gielen J."/>
            <person name="Ardiles W."/>
            <person name="Bents O."/>
            <person name="Lemcke K."/>
            <person name="Kolesov G."/>
            <person name="Mayer K.F.X."/>
            <person name="Rudd S."/>
            <person name="Schoof H."/>
            <person name="Schueller C."/>
            <person name="Zaccaria P."/>
            <person name="Mewes H.-W."/>
            <person name="Bevan M."/>
            <person name="Fransz P.F."/>
        </authorList>
    </citation>
    <scope>NUCLEOTIDE SEQUENCE [LARGE SCALE GENOMIC DNA]</scope>
    <source>
        <strain>cv. Columbia</strain>
    </source>
</reference>
<reference key="3">
    <citation type="journal article" date="1997" name="DNA Res.">
        <title>Structural analysis of Arabidopsis thaliana chromosome 5. I. Sequence features of the 1.6 Mb regions covered by twenty physically assigned P1 clones.</title>
        <authorList>
            <person name="Sato S."/>
            <person name="Kotani H."/>
            <person name="Nakamura Y."/>
            <person name="Kaneko T."/>
            <person name="Asamizu E."/>
            <person name="Fukami M."/>
            <person name="Miyajima N."/>
            <person name="Tabata S."/>
        </authorList>
    </citation>
    <scope>NUCLEOTIDE SEQUENCE [LARGE SCALE GENOMIC DNA]</scope>
    <source>
        <strain>cv. Columbia</strain>
    </source>
</reference>
<reference key="4">
    <citation type="journal article" date="2017" name="Plant J.">
        <title>Araport11: a complete reannotation of the Arabidopsis thaliana reference genome.</title>
        <authorList>
            <person name="Cheng C.Y."/>
            <person name="Krishnakumar V."/>
            <person name="Chan A.P."/>
            <person name="Thibaud-Nissen F."/>
            <person name="Schobel S."/>
            <person name="Town C.D."/>
        </authorList>
    </citation>
    <scope>GENOME REANNOTATION</scope>
    <source>
        <strain>cv. Columbia</strain>
    </source>
</reference>
<reference key="5">
    <citation type="journal article" date="2003" name="Science">
        <title>Empirical analysis of transcriptional activity in the Arabidopsis genome.</title>
        <authorList>
            <person name="Yamada K."/>
            <person name="Lim J."/>
            <person name="Dale J.M."/>
            <person name="Chen H."/>
            <person name="Shinn P."/>
            <person name="Palm C.J."/>
            <person name="Southwick A.M."/>
            <person name="Wu H.C."/>
            <person name="Kim C.J."/>
            <person name="Nguyen M."/>
            <person name="Pham P.K."/>
            <person name="Cheuk R.F."/>
            <person name="Karlin-Newmann G."/>
            <person name="Liu S.X."/>
            <person name="Lam B."/>
            <person name="Sakano H."/>
            <person name="Wu T."/>
            <person name="Yu G."/>
            <person name="Miranda M."/>
            <person name="Quach H.L."/>
            <person name="Tripp M."/>
            <person name="Chang C.H."/>
            <person name="Lee J.M."/>
            <person name="Toriumi M.J."/>
            <person name="Chan M.M."/>
            <person name="Tang C.C."/>
            <person name="Onodera C.S."/>
            <person name="Deng J.M."/>
            <person name="Akiyama K."/>
            <person name="Ansari Y."/>
            <person name="Arakawa T."/>
            <person name="Banh J."/>
            <person name="Banno F."/>
            <person name="Bowser L."/>
            <person name="Brooks S.Y."/>
            <person name="Carninci P."/>
            <person name="Chao Q."/>
            <person name="Choy N."/>
            <person name="Enju A."/>
            <person name="Goldsmith A.D."/>
            <person name="Gurjal M."/>
            <person name="Hansen N.F."/>
            <person name="Hayashizaki Y."/>
            <person name="Johnson-Hopson C."/>
            <person name="Hsuan V.W."/>
            <person name="Iida K."/>
            <person name="Karnes M."/>
            <person name="Khan S."/>
            <person name="Koesema E."/>
            <person name="Ishida J."/>
            <person name="Jiang P.X."/>
            <person name="Jones T."/>
            <person name="Kawai J."/>
            <person name="Kamiya A."/>
            <person name="Meyers C."/>
            <person name="Nakajima M."/>
            <person name="Narusaka M."/>
            <person name="Seki M."/>
            <person name="Sakurai T."/>
            <person name="Satou M."/>
            <person name="Tamse R."/>
            <person name="Vaysberg M."/>
            <person name="Wallender E.K."/>
            <person name="Wong C."/>
            <person name="Yamamura Y."/>
            <person name="Yuan S."/>
            <person name="Shinozaki K."/>
            <person name="Davis R.W."/>
            <person name="Theologis A."/>
            <person name="Ecker J.R."/>
        </authorList>
    </citation>
    <scope>NUCLEOTIDE SEQUENCE [LARGE SCALE MRNA]</scope>
    <source>
        <strain>cv. Columbia</strain>
    </source>
</reference>
<reference key="6">
    <citation type="journal article" date="2005" name="Plant Cell Physiol.">
        <title>Volatile C6-aldehydes and allo-ocimene activate defense genes and induce resistance against Botrytis cinerea in Arabidopsis thaliana.</title>
        <authorList>
            <person name="Kishimoto K."/>
            <person name="Matsui K."/>
            <person name="Ozawa R."/>
            <person name="Takabayashi J."/>
        </authorList>
    </citation>
    <scope>INDUCTION</scope>
</reference>
<reference key="7">
    <citation type="journal article" date="2007" name="Mol. Cell. Proteomics">
        <title>Multidimensional protein identification technology (MudPIT) analysis of ubiquitinated proteins in plants.</title>
        <authorList>
            <person name="Maor R."/>
            <person name="Jones A."/>
            <person name="Nuehse T.S."/>
            <person name="Studholme D.J."/>
            <person name="Peck S.C."/>
            <person name="Shirasu K."/>
        </authorList>
    </citation>
    <scope>UBIQUITINATION [LARGE SCALE ANALYSIS] AT LYS-491 AND LYS-500</scope>
    <scope>IDENTIFICATION BY MASS SPECTROMETRY [LARGE SCALE ANALYSIS]</scope>
    <source>
        <strain>cv. Landsberg erecta</strain>
    </source>
</reference>
<feature type="chain" id="PRO_0000218475" description="Diacylglycerol kinase 1">
    <location>
        <begin position="1"/>
        <end position="728"/>
    </location>
</feature>
<feature type="transmembrane region" description="Helical" evidence="2">
    <location>
        <begin position="27"/>
        <end position="48"/>
    </location>
</feature>
<feature type="domain" description="DAGKc" evidence="4">
    <location>
        <begin position="357"/>
        <end position="496"/>
    </location>
</feature>
<feature type="zinc finger region" description="Phorbol-ester/DAG-type 1" evidence="3">
    <location>
        <begin position="79"/>
        <end position="137"/>
    </location>
</feature>
<feature type="zinc finger region" description="Phorbol-ester/DAG-type 2" evidence="3">
    <location>
        <begin position="149"/>
        <end position="212"/>
    </location>
</feature>
<feature type="region of interest" description="Disordered" evidence="5">
    <location>
        <begin position="265"/>
        <end position="296"/>
    </location>
</feature>
<feature type="region of interest" description="Disordered" evidence="5">
    <location>
        <begin position="308"/>
        <end position="336"/>
    </location>
</feature>
<feature type="compositionally biased region" description="Polar residues" evidence="5">
    <location>
        <begin position="267"/>
        <end position="294"/>
    </location>
</feature>
<feature type="compositionally biased region" description="Low complexity" evidence="5">
    <location>
        <begin position="310"/>
        <end position="319"/>
    </location>
</feature>
<feature type="cross-link" description="Glycyl lysine isopeptide (Lys-Gly) (interchain with G-Cter in ubiquitin)" evidence="10">
    <location>
        <position position="491"/>
    </location>
</feature>
<feature type="cross-link" description="Glycyl lysine isopeptide (Lys-Gly) (interchain with G-Cter in ubiquitin)" evidence="10">
    <location>
        <position position="500"/>
    </location>
</feature>
<feature type="sequence conflict" description="In Ref. 1; BAA09856." evidence="8" ref="1">
    <original>N</original>
    <variation>T</variation>
    <location>
        <position position="509"/>
    </location>
</feature>
<organism>
    <name type="scientific">Arabidopsis thaliana</name>
    <name type="common">Mouse-ear cress</name>
    <dbReference type="NCBI Taxonomy" id="3702"/>
    <lineage>
        <taxon>Eukaryota</taxon>
        <taxon>Viridiplantae</taxon>
        <taxon>Streptophyta</taxon>
        <taxon>Embryophyta</taxon>
        <taxon>Tracheophyta</taxon>
        <taxon>Spermatophyta</taxon>
        <taxon>Magnoliopsida</taxon>
        <taxon>eudicotyledons</taxon>
        <taxon>Gunneridae</taxon>
        <taxon>Pentapetalae</taxon>
        <taxon>rosids</taxon>
        <taxon>malvids</taxon>
        <taxon>Brassicales</taxon>
        <taxon>Brassicaceae</taxon>
        <taxon>Camelineae</taxon>
        <taxon>Arabidopsis</taxon>
    </lineage>
</organism>
<name>DGK1_ARATH</name>
<dbReference type="EC" id="2.7.1.107"/>
<dbReference type="EMBL" id="D63787">
    <property type="protein sequence ID" value="BAA09856.1"/>
    <property type="molecule type" value="mRNA"/>
</dbReference>
<dbReference type="EMBL" id="AL133421">
    <property type="protein sequence ID" value="CAB62604.1"/>
    <property type="molecule type" value="Genomic_DNA"/>
</dbReference>
<dbReference type="EMBL" id="AB005249">
    <property type="protein sequence ID" value="BAB09956.1"/>
    <property type="molecule type" value="Genomic_DNA"/>
</dbReference>
<dbReference type="EMBL" id="CP002688">
    <property type="protein sequence ID" value="AED91221.1"/>
    <property type="molecule type" value="Genomic_DNA"/>
</dbReference>
<dbReference type="EMBL" id="CP002688">
    <property type="protein sequence ID" value="ANM69404.1"/>
    <property type="molecule type" value="Genomic_DNA"/>
</dbReference>
<dbReference type="EMBL" id="BT004148">
    <property type="protein sequence ID" value="AAO42169.1"/>
    <property type="molecule type" value="mRNA"/>
</dbReference>
<dbReference type="PIR" id="S71467">
    <property type="entry name" value="S71467"/>
</dbReference>
<dbReference type="RefSeq" id="NP_001331085.1">
    <property type="nucleotide sequence ID" value="NM_001342968.1"/>
</dbReference>
<dbReference type="RefSeq" id="NP_196409.1">
    <property type="nucleotide sequence ID" value="NM_120874.3"/>
</dbReference>
<dbReference type="FunCoup" id="Q39017">
    <property type="interactions" value="1949"/>
</dbReference>
<dbReference type="STRING" id="3702.Q39017"/>
<dbReference type="iPTMnet" id="Q39017"/>
<dbReference type="PaxDb" id="3702-AT5G07920.1"/>
<dbReference type="ProteomicsDB" id="224052"/>
<dbReference type="EnsemblPlants" id="AT5G07920.1">
    <property type="protein sequence ID" value="AT5G07920.1"/>
    <property type="gene ID" value="AT5G07920"/>
</dbReference>
<dbReference type="EnsemblPlants" id="AT5G07920.3">
    <property type="protein sequence ID" value="AT5G07920.3"/>
    <property type="gene ID" value="AT5G07920"/>
</dbReference>
<dbReference type="GeneID" id="830686"/>
<dbReference type="Gramene" id="AT5G07920.1">
    <property type="protein sequence ID" value="AT5G07920.1"/>
    <property type="gene ID" value="AT5G07920"/>
</dbReference>
<dbReference type="Gramene" id="AT5G07920.3">
    <property type="protein sequence ID" value="AT5G07920.3"/>
    <property type="gene ID" value="AT5G07920"/>
</dbReference>
<dbReference type="KEGG" id="ath:AT5G07920"/>
<dbReference type="Araport" id="AT5G07920"/>
<dbReference type="TAIR" id="AT5G07920">
    <property type="gene designation" value="DGK1"/>
</dbReference>
<dbReference type="eggNOG" id="KOG1169">
    <property type="taxonomic scope" value="Eukaryota"/>
</dbReference>
<dbReference type="HOGENOM" id="CLU_003770_2_0_1"/>
<dbReference type="InParanoid" id="Q39017"/>
<dbReference type="OrthoDB" id="242257at2759"/>
<dbReference type="PhylomeDB" id="Q39017"/>
<dbReference type="BioCyc" id="ARA:AT5G07920-MONOMER"/>
<dbReference type="PRO" id="PR:Q39017"/>
<dbReference type="Proteomes" id="UP000006548">
    <property type="component" value="Chromosome 5"/>
</dbReference>
<dbReference type="ExpressionAtlas" id="Q39017">
    <property type="expression patterns" value="baseline and differential"/>
</dbReference>
<dbReference type="GO" id="GO:0016020">
    <property type="term" value="C:membrane"/>
    <property type="evidence" value="ECO:0007669"/>
    <property type="project" value="UniProtKB-SubCell"/>
</dbReference>
<dbReference type="GO" id="GO:0005524">
    <property type="term" value="F:ATP binding"/>
    <property type="evidence" value="ECO:0007669"/>
    <property type="project" value="UniProtKB-KW"/>
</dbReference>
<dbReference type="GO" id="GO:0005509">
    <property type="term" value="F:calcium ion binding"/>
    <property type="evidence" value="ECO:0000250"/>
    <property type="project" value="TAIR"/>
</dbReference>
<dbReference type="GO" id="GO:0016301">
    <property type="term" value="F:kinase activity"/>
    <property type="evidence" value="ECO:0007669"/>
    <property type="project" value="UniProtKB-KW"/>
</dbReference>
<dbReference type="GO" id="GO:0008270">
    <property type="term" value="F:zinc ion binding"/>
    <property type="evidence" value="ECO:0007669"/>
    <property type="project" value="UniProtKB-KW"/>
</dbReference>
<dbReference type="GO" id="GO:0006952">
    <property type="term" value="P:defense response"/>
    <property type="evidence" value="ECO:0007669"/>
    <property type="project" value="UniProtKB-KW"/>
</dbReference>
<dbReference type="GO" id="GO:0007200">
    <property type="term" value="P:phospholipase C-activating G protein-coupled receptor signaling pathway"/>
    <property type="evidence" value="ECO:0007669"/>
    <property type="project" value="InterPro"/>
</dbReference>
<dbReference type="CDD" id="cd00029">
    <property type="entry name" value="C1"/>
    <property type="match status" value="1"/>
</dbReference>
<dbReference type="CDD" id="cd20805">
    <property type="entry name" value="C1_DGK_rpt2"/>
    <property type="match status" value="1"/>
</dbReference>
<dbReference type="FunFam" id="2.60.200.40:FF:000006">
    <property type="entry name" value="Diacylglycerol kinase"/>
    <property type="match status" value="1"/>
</dbReference>
<dbReference type="FunFam" id="3.30.60.20:FF:000027">
    <property type="entry name" value="Diacylglycerol kinase"/>
    <property type="match status" value="1"/>
</dbReference>
<dbReference type="FunFam" id="3.40.50.10330:FF:000006">
    <property type="entry name" value="Diacylglycerol kinase"/>
    <property type="match status" value="1"/>
</dbReference>
<dbReference type="Gene3D" id="2.60.200.40">
    <property type="match status" value="1"/>
</dbReference>
<dbReference type="Gene3D" id="3.30.60.20">
    <property type="match status" value="1"/>
</dbReference>
<dbReference type="Gene3D" id="3.40.50.10330">
    <property type="entry name" value="Probable inorganic polyphosphate/atp-NAD kinase, domain 1"/>
    <property type="match status" value="1"/>
</dbReference>
<dbReference type="InterPro" id="IPR017438">
    <property type="entry name" value="ATP-NAD_kinase_N"/>
</dbReference>
<dbReference type="InterPro" id="IPR046349">
    <property type="entry name" value="C1-like_sf"/>
</dbReference>
<dbReference type="InterPro" id="IPR037607">
    <property type="entry name" value="DGK"/>
</dbReference>
<dbReference type="InterPro" id="IPR000756">
    <property type="entry name" value="Diacylglycerol_kin_accessory"/>
</dbReference>
<dbReference type="InterPro" id="IPR001206">
    <property type="entry name" value="Diacylglycerol_kinase_cat_dom"/>
</dbReference>
<dbReference type="InterPro" id="IPR016064">
    <property type="entry name" value="NAD/diacylglycerol_kinase_sf"/>
</dbReference>
<dbReference type="InterPro" id="IPR002219">
    <property type="entry name" value="PE/DAG-bd"/>
</dbReference>
<dbReference type="PANTHER" id="PTHR11255">
    <property type="entry name" value="DIACYLGLYCEROL KINASE"/>
    <property type="match status" value="1"/>
</dbReference>
<dbReference type="PANTHER" id="PTHR11255:SF54">
    <property type="entry name" value="DIACYLGLYCEROL KINASE THETA"/>
    <property type="match status" value="1"/>
</dbReference>
<dbReference type="Pfam" id="PF00130">
    <property type="entry name" value="C1_1"/>
    <property type="match status" value="1"/>
</dbReference>
<dbReference type="Pfam" id="PF00609">
    <property type="entry name" value="DAGK_acc"/>
    <property type="match status" value="1"/>
</dbReference>
<dbReference type="Pfam" id="PF00781">
    <property type="entry name" value="DAGK_cat"/>
    <property type="match status" value="1"/>
</dbReference>
<dbReference type="SMART" id="SM00109">
    <property type="entry name" value="C1"/>
    <property type="match status" value="2"/>
</dbReference>
<dbReference type="SMART" id="SM00045">
    <property type="entry name" value="DAGKa"/>
    <property type="match status" value="1"/>
</dbReference>
<dbReference type="SMART" id="SM00046">
    <property type="entry name" value="DAGKc"/>
    <property type="match status" value="1"/>
</dbReference>
<dbReference type="SUPFAM" id="SSF57889">
    <property type="entry name" value="Cysteine-rich domain"/>
    <property type="match status" value="1"/>
</dbReference>
<dbReference type="SUPFAM" id="SSF111331">
    <property type="entry name" value="NAD kinase/diacylglycerol kinase-like"/>
    <property type="match status" value="1"/>
</dbReference>
<dbReference type="PROSITE" id="PS50146">
    <property type="entry name" value="DAGK"/>
    <property type="match status" value="1"/>
</dbReference>
<dbReference type="PROSITE" id="PS50081">
    <property type="entry name" value="ZF_DAG_PE_2"/>
    <property type="match status" value="2"/>
</dbReference>
<keyword id="KW-0067">ATP-binding</keyword>
<keyword id="KW-1017">Isopeptide bond</keyword>
<keyword id="KW-0418">Kinase</keyword>
<keyword id="KW-0472">Membrane</keyword>
<keyword id="KW-0479">Metal-binding</keyword>
<keyword id="KW-0547">Nucleotide-binding</keyword>
<keyword id="KW-0611">Plant defense</keyword>
<keyword id="KW-1185">Reference proteome</keyword>
<keyword id="KW-0677">Repeat</keyword>
<keyword id="KW-0346">Stress response</keyword>
<keyword id="KW-0808">Transferase</keyword>
<keyword id="KW-0812">Transmembrane</keyword>
<keyword id="KW-1133">Transmembrane helix</keyword>
<keyword id="KW-0832">Ubl conjugation</keyword>
<keyword id="KW-0862">Zinc</keyword>
<keyword id="KW-0863">Zinc-finger</keyword>
<proteinExistence type="evidence at protein level"/>
<protein>
    <recommendedName>
        <fullName>Diacylglycerol kinase 1</fullName>
        <shortName>AtDGK1</shortName>
        <shortName>DAG kinase 1</shortName>
        <ecNumber>2.7.1.107</ecNumber>
    </recommendedName>
    <alternativeName>
        <fullName>Diglyceride kinase 1</fullName>
        <shortName>DGK 1</shortName>
    </alternativeName>
</protein>
<accession>Q39017</accession>
<accession>Q9SD92</accession>
<comment type="function">
    <text evidence="1">Phosphorylates the second messenger diacylglycerol (DAG) to generate phosphatidic acid (PA), another important signaling molecule. PA is required for plant development and responses to abiotic stress and pathogen attack. May be involved in the accumulation of PA during cold stress (By similarity).</text>
</comment>
<comment type="catalytic activity">
    <reaction>
        <text>a 1,2-diacyl-sn-glycerol + ATP = a 1,2-diacyl-sn-glycero-3-phosphate + ADP + H(+)</text>
        <dbReference type="Rhea" id="RHEA:10272"/>
        <dbReference type="ChEBI" id="CHEBI:15378"/>
        <dbReference type="ChEBI" id="CHEBI:17815"/>
        <dbReference type="ChEBI" id="CHEBI:30616"/>
        <dbReference type="ChEBI" id="CHEBI:58608"/>
        <dbReference type="ChEBI" id="CHEBI:456216"/>
        <dbReference type="EC" id="2.7.1.107"/>
    </reaction>
</comment>
<comment type="subunit">
    <text evidence="1">Monomer.</text>
</comment>
<comment type="subcellular location">
    <subcellularLocation>
        <location evidence="8">Membrane</location>
        <topology evidence="8">Single-pass membrane protein</topology>
    </subcellularLocation>
</comment>
<comment type="tissue specificity">
    <text evidence="7">Expressed in roots, shoots, and leaves.</text>
</comment>
<comment type="induction">
    <text evidence="6">By volatile C6-aldehydes ((E)-2-hexenal, (Z)-3-hexenal, (Z)-3-hexenol), and allo-ocimene.</text>
</comment>
<comment type="miscellaneous">
    <text evidence="9">Treatment with (E)-2-hexenal, (Z)-3-hexenal and allo-ocimene increases plant resistance against the necrotrophic fungal pathogen Botrytis cinerea.</text>
</comment>
<comment type="similarity">
    <text evidence="8">Belongs to the eukaryotic diacylglycerol kinase family.</text>
</comment>